<evidence type="ECO:0000255" key="1"/>
<evidence type="ECO:0000255" key="2">
    <source>
        <dbReference type="PROSITE-ProRule" id="PRU00143"/>
    </source>
</evidence>
<evidence type="ECO:0000256" key="3">
    <source>
        <dbReference type="SAM" id="MobiDB-lite"/>
    </source>
</evidence>
<evidence type="ECO:0000305" key="4"/>
<dbReference type="EC" id="3.4.21.-"/>
<dbReference type="EMBL" id="CP000029">
    <property type="protein sequence ID" value="AAW54044.1"/>
    <property type="molecule type" value="Genomic_DNA"/>
</dbReference>
<dbReference type="RefSeq" id="WP_001829335.1">
    <property type="nucleotide sequence ID" value="NC_002976.3"/>
</dbReference>
<dbReference type="SMR" id="Q5HQE2"/>
<dbReference type="STRING" id="176279.SERP0611"/>
<dbReference type="KEGG" id="ser:SERP0611"/>
<dbReference type="eggNOG" id="COG0265">
    <property type="taxonomic scope" value="Bacteria"/>
</dbReference>
<dbReference type="HOGENOM" id="CLU_027421_0_0_9"/>
<dbReference type="Proteomes" id="UP000000531">
    <property type="component" value="Chromosome"/>
</dbReference>
<dbReference type="GO" id="GO:0005886">
    <property type="term" value="C:plasma membrane"/>
    <property type="evidence" value="ECO:0007669"/>
    <property type="project" value="UniProtKB-SubCell"/>
</dbReference>
<dbReference type="GO" id="GO:0004252">
    <property type="term" value="F:serine-type endopeptidase activity"/>
    <property type="evidence" value="ECO:0007669"/>
    <property type="project" value="InterPro"/>
</dbReference>
<dbReference type="GO" id="GO:0006508">
    <property type="term" value="P:proteolysis"/>
    <property type="evidence" value="ECO:0007669"/>
    <property type="project" value="UniProtKB-KW"/>
</dbReference>
<dbReference type="CDD" id="cd06781">
    <property type="entry name" value="cpPDZ_BsHtra-like"/>
    <property type="match status" value="1"/>
</dbReference>
<dbReference type="Gene3D" id="2.30.42.10">
    <property type="match status" value="1"/>
</dbReference>
<dbReference type="Gene3D" id="2.40.10.10">
    <property type="entry name" value="Trypsin-like serine proteases"/>
    <property type="match status" value="2"/>
</dbReference>
<dbReference type="InterPro" id="IPR051201">
    <property type="entry name" value="Chloro_Bact_Ser_Proteases"/>
</dbReference>
<dbReference type="InterPro" id="IPR001478">
    <property type="entry name" value="PDZ"/>
</dbReference>
<dbReference type="InterPro" id="IPR036034">
    <property type="entry name" value="PDZ_sf"/>
</dbReference>
<dbReference type="InterPro" id="IPR009003">
    <property type="entry name" value="Peptidase_S1_PA"/>
</dbReference>
<dbReference type="InterPro" id="IPR043504">
    <property type="entry name" value="Peptidase_S1_PA_chymotrypsin"/>
</dbReference>
<dbReference type="InterPro" id="IPR001940">
    <property type="entry name" value="Peptidase_S1C"/>
</dbReference>
<dbReference type="PANTHER" id="PTHR43343">
    <property type="entry name" value="PEPTIDASE S12"/>
    <property type="match status" value="1"/>
</dbReference>
<dbReference type="PANTHER" id="PTHR43343:SF3">
    <property type="entry name" value="PROTEASE DO-LIKE 8, CHLOROPLASTIC"/>
    <property type="match status" value="1"/>
</dbReference>
<dbReference type="Pfam" id="PF13180">
    <property type="entry name" value="PDZ_2"/>
    <property type="match status" value="1"/>
</dbReference>
<dbReference type="Pfam" id="PF13365">
    <property type="entry name" value="Trypsin_2"/>
    <property type="match status" value="1"/>
</dbReference>
<dbReference type="PRINTS" id="PR00834">
    <property type="entry name" value="PROTEASES2C"/>
</dbReference>
<dbReference type="SMART" id="SM00228">
    <property type="entry name" value="PDZ"/>
    <property type="match status" value="1"/>
</dbReference>
<dbReference type="SUPFAM" id="SSF50156">
    <property type="entry name" value="PDZ domain-like"/>
    <property type="match status" value="1"/>
</dbReference>
<dbReference type="SUPFAM" id="SSF50494">
    <property type="entry name" value="Trypsin-like serine proteases"/>
    <property type="match status" value="1"/>
</dbReference>
<dbReference type="PROSITE" id="PS50106">
    <property type="entry name" value="PDZ"/>
    <property type="match status" value="1"/>
</dbReference>
<keyword id="KW-1003">Cell membrane</keyword>
<keyword id="KW-0378">Hydrolase</keyword>
<keyword id="KW-0472">Membrane</keyword>
<keyword id="KW-0645">Protease</keyword>
<keyword id="KW-1185">Reference proteome</keyword>
<keyword id="KW-0720">Serine protease</keyword>
<keyword id="KW-0812">Transmembrane</keyword>
<keyword id="KW-1133">Transmembrane helix</keyword>
<organism>
    <name type="scientific">Staphylococcus epidermidis (strain ATCC 35984 / DSM 28319 / BCRC 17069 / CCUG 31568 / BM 3577 / RP62A)</name>
    <dbReference type="NCBI Taxonomy" id="176279"/>
    <lineage>
        <taxon>Bacteria</taxon>
        <taxon>Bacillati</taxon>
        <taxon>Bacillota</taxon>
        <taxon>Bacilli</taxon>
        <taxon>Bacillales</taxon>
        <taxon>Staphylococcaceae</taxon>
        <taxon>Staphylococcus</taxon>
    </lineage>
</organism>
<protein>
    <recommendedName>
        <fullName>Serine protease HtrA-like</fullName>
        <ecNumber>3.4.21.-</ecNumber>
    </recommendedName>
</protein>
<accession>Q5HQE2</accession>
<reference key="1">
    <citation type="journal article" date="2005" name="J. Bacteriol.">
        <title>Insights on evolution of virulence and resistance from the complete genome analysis of an early methicillin-resistant Staphylococcus aureus strain and a biofilm-producing methicillin-resistant Staphylococcus epidermidis strain.</title>
        <authorList>
            <person name="Gill S.R."/>
            <person name="Fouts D.E."/>
            <person name="Archer G.L."/>
            <person name="Mongodin E.F."/>
            <person name="DeBoy R.T."/>
            <person name="Ravel J."/>
            <person name="Paulsen I.T."/>
            <person name="Kolonay J.F."/>
            <person name="Brinkac L.M."/>
            <person name="Beanan M.J."/>
            <person name="Dodson R.J."/>
            <person name="Daugherty S.C."/>
            <person name="Madupu R."/>
            <person name="Angiuoli S.V."/>
            <person name="Durkin A.S."/>
            <person name="Haft D.H."/>
            <person name="Vamathevan J.J."/>
            <person name="Khouri H."/>
            <person name="Utterback T.R."/>
            <person name="Lee C."/>
            <person name="Dimitrov G."/>
            <person name="Jiang L."/>
            <person name="Qin H."/>
            <person name="Weidman J."/>
            <person name="Tran K."/>
            <person name="Kang K.H."/>
            <person name="Hance I.R."/>
            <person name="Nelson K.E."/>
            <person name="Fraser C.M."/>
        </authorList>
    </citation>
    <scope>NUCLEOTIDE SEQUENCE [LARGE SCALE GENOMIC DNA]</scope>
    <source>
        <strain>ATCC 35984 / DSM 28319 / BCRC 17069 / CCUG 31568 / BM 3577 / RP62A</strain>
    </source>
</reference>
<proteinExistence type="inferred from homology"/>
<gene>
    <name type="ordered locus">SERP0611</name>
</gene>
<comment type="subcellular location">
    <subcellularLocation>
        <location evidence="4">Cell membrane</location>
        <topology evidence="4">Single-pass membrane protein</topology>
    </subcellularLocation>
</comment>
<comment type="similarity">
    <text evidence="4">Belongs to the peptidase S1C family.</text>
</comment>
<name>HTRAL_STAEQ</name>
<feature type="chain" id="PRO_0000252471" description="Serine protease HtrA-like">
    <location>
        <begin position="1"/>
        <end position="585"/>
    </location>
</feature>
<feature type="transmembrane region" description="Helical" evidence="1">
    <location>
        <begin position="224"/>
        <end position="244"/>
    </location>
</feature>
<feature type="domain" description="PDZ" evidence="2">
    <location>
        <begin position="516"/>
        <end position="575"/>
    </location>
</feature>
<feature type="region of interest" description="Disordered" evidence="3">
    <location>
        <begin position="1"/>
        <end position="184"/>
    </location>
</feature>
<feature type="compositionally biased region" description="Basic and acidic residues" evidence="3">
    <location>
        <begin position="21"/>
        <end position="82"/>
    </location>
</feature>
<feature type="compositionally biased region" description="Polar residues" evidence="3">
    <location>
        <begin position="84"/>
        <end position="94"/>
    </location>
</feature>
<feature type="compositionally biased region" description="Basic and acidic residues" evidence="3">
    <location>
        <begin position="95"/>
        <end position="113"/>
    </location>
</feature>
<feature type="compositionally biased region" description="Polar residues" evidence="3">
    <location>
        <begin position="114"/>
        <end position="124"/>
    </location>
</feature>
<feature type="compositionally biased region" description="Basic and acidic residues" evidence="3">
    <location>
        <begin position="126"/>
        <end position="139"/>
    </location>
</feature>
<feature type="compositionally biased region" description="Polar residues" evidence="3">
    <location>
        <begin position="151"/>
        <end position="175"/>
    </location>
</feature>
<feature type="active site" description="Charge relay system" evidence="1">
    <location>
        <position position="320"/>
    </location>
</feature>
<feature type="active site" description="Charge relay system" evidence="1">
    <location>
        <position position="350"/>
    </location>
</feature>
<feature type="active site" description="Charge relay system" evidence="1">
    <location>
        <position position="435"/>
    </location>
</feature>
<sequence>MDNNKKQVIPRSQYRRKRREYFHNVEREERIRREKIEKENQAKREQHQTKVNEERVKDNLRKARIEKLTQEEIHQQRDDKSYKQKTLNQNNQMNKSKDDDNKIGEESLHDVRVSSDTSTLPHQNKSIKDYDDSGNESKQHTKLTSKESMLGVNSNHTEQDSRSTQPYSSKHSYSQPKDKDNDNTQQAQFLKKEDKQRNRAENIKKVNEFKQLVVAFFKEHWPKMLIIIGIIVLLLILNAIFTTVNKNDHTNDSAFNGTAKDETTAMKIAENSVKSVVTVENDLSNDTTVSDNKNESDNEIGSGVVYKKVGDSIYIFTNAHVVGDQEKQKVTYGNDKSVTGKVIGKDKWSDLAVVKAKVADENIKPMTMGDSNNIKLAEPILVIGNPLGTDFKGSVSQGIVSGLNRHVPVDIDKNDNYDALMKAFQIDAPVNPGNSGGAVVDRDGRLIGIVSLKIDMHNVEGMAFAIPINDVRKIAKELEHKGKVNYPNTEIKIKNVGDLDDSERNAINLPAKVNHGVLIGEVKENGLGDKAGLKKGDVIVELDGKKIEDNLRYRQVIYSHYDDQKTITAKIYRNGAEKNIKIKLK</sequence>